<keyword id="KW-0226">DNA condensation</keyword>
<keyword id="KW-0238">DNA-binding</keyword>
<feature type="chain" id="PRO_0000104953" description="DNA-binding protein HU-beta 2">
    <location>
        <begin position="1"/>
        <end position="91"/>
    </location>
</feature>
<comment type="function">
    <text evidence="1">Histone-like DNA-binding protein which is capable of wrapping DNA to stabilize it, and thus to prevent its denaturation under extreme environmental conditions.</text>
</comment>
<comment type="similarity">
    <text evidence="2">Belongs to the bacterial histone-like protein family.</text>
</comment>
<protein>
    <recommendedName>
        <fullName>DNA-binding protein HU-beta 2</fullName>
    </recommendedName>
</protein>
<reference key="1">
    <citation type="journal article" date="2000" name="Infect. Immun.">
        <title>Molecular and biological analysis of eight genetic islands that distinguish Neisseria meningitidis from the closely related pathogen Neisseria gonorrhoeae.</title>
        <authorList>
            <person name="Klee S.R."/>
            <person name="Nassif X."/>
            <person name="Kusecek B."/>
            <person name="Merker P."/>
            <person name="Beretti J.-L."/>
            <person name="Achtman M."/>
            <person name="Tinsley C.R."/>
        </authorList>
    </citation>
    <scope>NUCLEOTIDE SEQUENCE [GENOMIC DNA]</scope>
    <source>
        <strain>DSM 15465 / Z2491</strain>
    </source>
</reference>
<reference key="2">
    <citation type="journal article" date="2000" name="Nature">
        <title>Complete DNA sequence of a serogroup A strain of Neisseria meningitidis Z2491.</title>
        <authorList>
            <person name="Parkhill J."/>
            <person name="Achtman M."/>
            <person name="James K.D."/>
            <person name="Bentley S.D."/>
            <person name="Churcher C.M."/>
            <person name="Klee S.R."/>
            <person name="Morelli G."/>
            <person name="Basham D."/>
            <person name="Brown D."/>
            <person name="Chillingworth T."/>
            <person name="Davies R.M."/>
            <person name="Davis P."/>
            <person name="Devlin K."/>
            <person name="Feltwell T."/>
            <person name="Hamlin N."/>
            <person name="Holroyd S."/>
            <person name="Jagels K."/>
            <person name="Leather S."/>
            <person name="Moule S."/>
            <person name="Mungall K.L."/>
            <person name="Quail M.A."/>
            <person name="Rajandream M.A."/>
            <person name="Rutherford K.M."/>
            <person name="Simmonds M."/>
            <person name="Skelton J."/>
            <person name="Whitehead S."/>
            <person name="Spratt B.G."/>
            <person name="Barrell B.G."/>
        </authorList>
    </citation>
    <scope>NUCLEOTIDE SEQUENCE [LARGE SCALE GENOMIC DNA]</scope>
    <source>
        <strain>DSM 15465 / Z2491</strain>
    </source>
</reference>
<name>DBHC_NEIMA</name>
<evidence type="ECO:0000250" key="1"/>
<evidence type="ECO:0000305" key="2"/>
<sequence>MNKSELIQAIADEAELSKRAAAEFVNAFVSVVTQELKDGNDVTLVGFGTFHAAQSAERQGRNPKTGEPLTIAARKTPKFRSGKALKDAVNG</sequence>
<proteinExistence type="inferred from homology"/>
<gene>
    <name type="primary">hupB2</name>
    <name type="synonym">rth13</name>
    <name type="ordered locus">NMA1868</name>
</gene>
<dbReference type="EMBL" id="AJ391256">
    <property type="protein sequence ID" value="CAB71971.1"/>
    <property type="molecule type" value="Genomic_DNA"/>
</dbReference>
<dbReference type="EMBL" id="AL157959">
    <property type="protein sequence ID" value="CAM08987.1"/>
    <property type="molecule type" value="Genomic_DNA"/>
</dbReference>
<dbReference type="PIR" id="G81813">
    <property type="entry name" value="G81813"/>
</dbReference>
<dbReference type="RefSeq" id="WP_002212716.1">
    <property type="nucleotide sequence ID" value="NC_003116.1"/>
</dbReference>
<dbReference type="SMR" id="Q9JR30"/>
<dbReference type="EnsemblBacteria" id="CAM08987">
    <property type="protein sequence ID" value="CAM08987"/>
    <property type="gene ID" value="NMA1868"/>
</dbReference>
<dbReference type="GeneID" id="93387717"/>
<dbReference type="KEGG" id="nma:NMA1868"/>
<dbReference type="HOGENOM" id="CLU_105066_3_3_4"/>
<dbReference type="Proteomes" id="UP000000626">
    <property type="component" value="Chromosome"/>
</dbReference>
<dbReference type="GO" id="GO:0005829">
    <property type="term" value="C:cytosol"/>
    <property type="evidence" value="ECO:0007669"/>
    <property type="project" value="TreeGrafter"/>
</dbReference>
<dbReference type="GO" id="GO:0003677">
    <property type="term" value="F:DNA binding"/>
    <property type="evidence" value="ECO:0007669"/>
    <property type="project" value="UniProtKB-KW"/>
</dbReference>
<dbReference type="GO" id="GO:0030527">
    <property type="term" value="F:structural constituent of chromatin"/>
    <property type="evidence" value="ECO:0007669"/>
    <property type="project" value="InterPro"/>
</dbReference>
<dbReference type="GO" id="GO:0030261">
    <property type="term" value="P:chromosome condensation"/>
    <property type="evidence" value="ECO:0007669"/>
    <property type="project" value="UniProtKB-KW"/>
</dbReference>
<dbReference type="CDD" id="cd13831">
    <property type="entry name" value="HU"/>
    <property type="match status" value="1"/>
</dbReference>
<dbReference type="FunFam" id="4.10.520.10:FF:000001">
    <property type="entry name" value="DNA-binding protein HU"/>
    <property type="match status" value="1"/>
</dbReference>
<dbReference type="Gene3D" id="4.10.520.10">
    <property type="entry name" value="IHF-like DNA-binding proteins"/>
    <property type="match status" value="1"/>
</dbReference>
<dbReference type="InterPro" id="IPR000119">
    <property type="entry name" value="Hist_DNA-bd"/>
</dbReference>
<dbReference type="InterPro" id="IPR010992">
    <property type="entry name" value="IHF-like_DNA-bd_dom_sf"/>
</dbReference>
<dbReference type="PANTHER" id="PTHR33175">
    <property type="entry name" value="DNA-BINDING PROTEIN HU"/>
    <property type="match status" value="1"/>
</dbReference>
<dbReference type="PANTHER" id="PTHR33175:SF3">
    <property type="entry name" value="DNA-BINDING PROTEIN HU-BETA"/>
    <property type="match status" value="1"/>
</dbReference>
<dbReference type="Pfam" id="PF00216">
    <property type="entry name" value="Bac_DNA_binding"/>
    <property type="match status" value="1"/>
</dbReference>
<dbReference type="PRINTS" id="PR01727">
    <property type="entry name" value="DNABINDINGHU"/>
</dbReference>
<dbReference type="SMART" id="SM00411">
    <property type="entry name" value="BHL"/>
    <property type="match status" value="1"/>
</dbReference>
<dbReference type="SUPFAM" id="SSF47729">
    <property type="entry name" value="IHF-like DNA-binding proteins"/>
    <property type="match status" value="1"/>
</dbReference>
<accession>Q9JR30</accession>
<accession>A1IT75</accession>
<organism>
    <name type="scientific">Neisseria meningitidis serogroup A / serotype 4A (strain DSM 15465 / Z2491)</name>
    <dbReference type="NCBI Taxonomy" id="122587"/>
    <lineage>
        <taxon>Bacteria</taxon>
        <taxon>Pseudomonadati</taxon>
        <taxon>Pseudomonadota</taxon>
        <taxon>Betaproteobacteria</taxon>
        <taxon>Neisseriales</taxon>
        <taxon>Neisseriaceae</taxon>
        <taxon>Neisseria</taxon>
    </lineage>
</organism>